<dbReference type="EMBL" id="CP000611">
    <property type="protein sequence ID" value="ABQ73060.1"/>
    <property type="molecule type" value="Genomic_DNA"/>
</dbReference>
<dbReference type="RefSeq" id="WP_003406708.1">
    <property type="nucleotide sequence ID" value="NZ_CP016972.1"/>
</dbReference>
<dbReference type="BMRB" id="A5U210"/>
<dbReference type="SMR" id="A5U210"/>
<dbReference type="KEGG" id="mra:MRA_1319"/>
<dbReference type="eggNOG" id="COG0355">
    <property type="taxonomic scope" value="Bacteria"/>
</dbReference>
<dbReference type="HOGENOM" id="CLU_084338_4_0_11"/>
<dbReference type="Proteomes" id="UP000001988">
    <property type="component" value="Chromosome"/>
</dbReference>
<dbReference type="GO" id="GO:0005886">
    <property type="term" value="C:plasma membrane"/>
    <property type="evidence" value="ECO:0007669"/>
    <property type="project" value="UniProtKB-SubCell"/>
</dbReference>
<dbReference type="GO" id="GO:0045259">
    <property type="term" value="C:proton-transporting ATP synthase complex"/>
    <property type="evidence" value="ECO:0007669"/>
    <property type="project" value="UniProtKB-KW"/>
</dbReference>
<dbReference type="GO" id="GO:0005524">
    <property type="term" value="F:ATP binding"/>
    <property type="evidence" value="ECO:0007669"/>
    <property type="project" value="UniProtKB-UniRule"/>
</dbReference>
<dbReference type="GO" id="GO:0046933">
    <property type="term" value="F:proton-transporting ATP synthase activity, rotational mechanism"/>
    <property type="evidence" value="ECO:0007669"/>
    <property type="project" value="UniProtKB-UniRule"/>
</dbReference>
<dbReference type="CDD" id="cd12152">
    <property type="entry name" value="F1-ATPase_delta"/>
    <property type="match status" value="1"/>
</dbReference>
<dbReference type="FunFam" id="2.60.15.10:FF:000011">
    <property type="entry name" value="ATP synthase epsilon chain"/>
    <property type="match status" value="1"/>
</dbReference>
<dbReference type="Gene3D" id="2.60.15.10">
    <property type="entry name" value="F0F1 ATP synthase delta/epsilon subunit, N-terminal"/>
    <property type="match status" value="1"/>
</dbReference>
<dbReference type="HAMAP" id="MF_00530">
    <property type="entry name" value="ATP_synth_epsil_bac"/>
    <property type="match status" value="1"/>
</dbReference>
<dbReference type="InterPro" id="IPR001469">
    <property type="entry name" value="ATP_synth_F1_dsu/esu"/>
</dbReference>
<dbReference type="InterPro" id="IPR020546">
    <property type="entry name" value="ATP_synth_F1_dsu/esu_N"/>
</dbReference>
<dbReference type="InterPro" id="IPR036771">
    <property type="entry name" value="ATPsynth_dsu/esu_N"/>
</dbReference>
<dbReference type="NCBIfam" id="TIGR01216">
    <property type="entry name" value="ATP_synt_epsi"/>
    <property type="match status" value="1"/>
</dbReference>
<dbReference type="NCBIfam" id="NF009977">
    <property type="entry name" value="PRK13442.1"/>
    <property type="match status" value="1"/>
</dbReference>
<dbReference type="PANTHER" id="PTHR13822">
    <property type="entry name" value="ATP SYNTHASE DELTA/EPSILON CHAIN"/>
    <property type="match status" value="1"/>
</dbReference>
<dbReference type="PANTHER" id="PTHR13822:SF10">
    <property type="entry name" value="ATP SYNTHASE EPSILON CHAIN, CHLOROPLASTIC"/>
    <property type="match status" value="1"/>
</dbReference>
<dbReference type="Pfam" id="PF02823">
    <property type="entry name" value="ATP-synt_DE_N"/>
    <property type="match status" value="1"/>
</dbReference>
<dbReference type="SUPFAM" id="SSF51344">
    <property type="entry name" value="Epsilon subunit of F1F0-ATP synthase N-terminal domain"/>
    <property type="match status" value="1"/>
</dbReference>
<sequence length="121" mass="13135">MAELNVEIVAVDRNIWSGTAKFLFTRTTVGEIGILPRHIPLVAQLVDDAMVRVEREGEKDLRIAVDGGFLSVTEEGVSILAESAEFESEIDEAAAKQDSESDDPRIAARGRARLRAVGAID</sequence>
<evidence type="ECO:0000255" key="1">
    <source>
        <dbReference type="HAMAP-Rule" id="MF_00530"/>
    </source>
</evidence>
<comment type="function">
    <text evidence="1">Produces ATP from ADP in the presence of a proton gradient across the membrane.</text>
</comment>
<comment type="subunit">
    <text evidence="1">F-type ATPases have 2 components, CF(1) - the catalytic core - and CF(0) - the membrane proton channel. CF(1) has five subunits: alpha(3), beta(3), gamma(1), delta(1), epsilon(1). CF(0) has three main subunits: a, b and c.</text>
</comment>
<comment type="subcellular location">
    <subcellularLocation>
        <location evidence="1">Cell membrane</location>
        <topology evidence="1">Peripheral membrane protein</topology>
    </subcellularLocation>
</comment>
<comment type="similarity">
    <text evidence="1">Belongs to the ATPase epsilon chain family.</text>
</comment>
<gene>
    <name evidence="1" type="primary">atpC</name>
    <name type="ordered locus">MRA_1319</name>
</gene>
<proteinExistence type="inferred from homology"/>
<keyword id="KW-0066">ATP synthesis</keyword>
<keyword id="KW-1003">Cell membrane</keyword>
<keyword id="KW-0139">CF(1)</keyword>
<keyword id="KW-0375">Hydrogen ion transport</keyword>
<keyword id="KW-0406">Ion transport</keyword>
<keyword id="KW-0472">Membrane</keyword>
<keyword id="KW-1185">Reference proteome</keyword>
<keyword id="KW-0813">Transport</keyword>
<name>ATPE_MYCTA</name>
<protein>
    <recommendedName>
        <fullName evidence="1">ATP synthase epsilon chain</fullName>
    </recommendedName>
    <alternativeName>
        <fullName evidence="1">ATP synthase F1 sector epsilon subunit</fullName>
    </alternativeName>
    <alternativeName>
        <fullName evidence="1">F-ATPase epsilon subunit</fullName>
    </alternativeName>
</protein>
<organism>
    <name type="scientific">Mycobacterium tuberculosis (strain ATCC 25177 / H37Ra)</name>
    <dbReference type="NCBI Taxonomy" id="419947"/>
    <lineage>
        <taxon>Bacteria</taxon>
        <taxon>Bacillati</taxon>
        <taxon>Actinomycetota</taxon>
        <taxon>Actinomycetes</taxon>
        <taxon>Mycobacteriales</taxon>
        <taxon>Mycobacteriaceae</taxon>
        <taxon>Mycobacterium</taxon>
        <taxon>Mycobacterium tuberculosis complex</taxon>
    </lineage>
</organism>
<accession>A5U210</accession>
<reference key="1">
    <citation type="journal article" date="2008" name="PLoS ONE">
        <title>Genetic basis of virulence attenuation revealed by comparative genomic analysis of Mycobacterium tuberculosis strain H37Ra versus H37Rv.</title>
        <authorList>
            <person name="Zheng H."/>
            <person name="Lu L."/>
            <person name="Wang B."/>
            <person name="Pu S."/>
            <person name="Zhang X."/>
            <person name="Zhu G."/>
            <person name="Shi W."/>
            <person name="Zhang L."/>
            <person name="Wang H."/>
            <person name="Wang S."/>
            <person name="Zhao G."/>
            <person name="Zhang Y."/>
        </authorList>
    </citation>
    <scope>NUCLEOTIDE SEQUENCE [LARGE SCALE GENOMIC DNA]</scope>
    <source>
        <strain>ATCC 25177 / H37Ra</strain>
    </source>
</reference>
<feature type="chain" id="PRO_1000056509" description="ATP synthase epsilon chain">
    <location>
        <begin position="1"/>
        <end position="121"/>
    </location>
</feature>